<keyword id="KW-0007">Acetylation</keyword>
<keyword id="KW-0903">Direct protein sequencing</keyword>
<keyword id="KW-0349">Heme</keyword>
<keyword id="KW-0408">Iron</keyword>
<keyword id="KW-0479">Metal-binding</keyword>
<keyword id="KW-0561">Oxygen transport</keyword>
<keyword id="KW-0597">Phosphoprotein</keyword>
<keyword id="KW-0702">S-nitrosylation</keyword>
<keyword id="KW-0813">Transport</keyword>
<dbReference type="PIR" id="A02366">
    <property type="entry name" value="HBLRS"/>
</dbReference>
<dbReference type="SMR" id="P02049"/>
<dbReference type="GO" id="GO:0072562">
    <property type="term" value="C:blood microparticle"/>
    <property type="evidence" value="ECO:0007669"/>
    <property type="project" value="TreeGrafter"/>
</dbReference>
<dbReference type="GO" id="GO:0031838">
    <property type="term" value="C:haptoglobin-hemoglobin complex"/>
    <property type="evidence" value="ECO:0007669"/>
    <property type="project" value="TreeGrafter"/>
</dbReference>
<dbReference type="GO" id="GO:0005833">
    <property type="term" value="C:hemoglobin complex"/>
    <property type="evidence" value="ECO:0007669"/>
    <property type="project" value="InterPro"/>
</dbReference>
<dbReference type="GO" id="GO:0031720">
    <property type="term" value="F:haptoglobin binding"/>
    <property type="evidence" value="ECO:0007669"/>
    <property type="project" value="TreeGrafter"/>
</dbReference>
<dbReference type="GO" id="GO:0020037">
    <property type="term" value="F:heme binding"/>
    <property type="evidence" value="ECO:0007669"/>
    <property type="project" value="InterPro"/>
</dbReference>
<dbReference type="GO" id="GO:0031721">
    <property type="term" value="F:hemoglobin alpha binding"/>
    <property type="evidence" value="ECO:0007669"/>
    <property type="project" value="TreeGrafter"/>
</dbReference>
<dbReference type="GO" id="GO:0046872">
    <property type="term" value="F:metal ion binding"/>
    <property type="evidence" value="ECO:0007669"/>
    <property type="project" value="UniProtKB-KW"/>
</dbReference>
<dbReference type="GO" id="GO:0043177">
    <property type="term" value="F:organic acid binding"/>
    <property type="evidence" value="ECO:0007669"/>
    <property type="project" value="TreeGrafter"/>
</dbReference>
<dbReference type="GO" id="GO:0019825">
    <property type="term" value="F:oxygen binding"/>
    <property type="evidence" value="ECO:0007669"/>
    <property type="project" value="InterPro"/>
</dbReference>
<dbReference type="GO" id="GO:0005344">
    <property type="term" value="F:oxygen carrier activity"/>
    <property type="evidence" value="ECO:0007669"/>
    <property type="project" value="UniProtKB-KW"/>
</dbReference>
<dbReference type="GO" id="GO:0004601">
    <property type="term" value="F:peroxidase activity"/>
    <property type="evidence" value="ECO:0007669"/>
    <property type="project" value="TreeGrafter"/>
</dbReference>
<dbReference type="GO" id="GO:0042744">
    <property type="term" value="P:hydrogen peroxide catabolic process"/>
    <property type="evidence" value="ECO:0007669"/>
    <property type="project" value="TreeGrafter"/>
</dbReference>
<dbReference type="CDD" id="cd08925">
    <property type="entry name" value="Hb-beta-like"/>
    <property type="match status" value="1"/>
</dbReference>
<dbReference type="FunFam" id="1.10.490.10:FF:000001">
    <property type="entry name" value="Hemoglobin subunit beta"/>
    <property type="match status" value="1"/>
</dbReference>
<dbReference type="Gene3D" id="1.10.490.10">
    <property type="entry name" value="Globins"/>
    <property type="match status" value="1"/>
</dbReference>
<dbReference type="InterPro" id="IPR000971">
    <property type="entry name" value="Globin"/>
</dbReference>
<dbReference type="InterPro" id="IPR009050">
    <property type="entry name" value="Globin-like_sf"/>
</dbReference>
<dbReference type="InterPro" id="IPR012292">
    <property type="entry name" value="Globin/Proto"/>
</dbReference>
<dbReference type="InterPro" id="IPR002337">
    <property type="entry name" value="Hemoglobin_b"/>
</dbReference>
<dbReference type="InterPro" id="IPR050056">
    <property type="entry name" value="Hemoglobin_oxygen_transport"/>
</dbReference>
<dbReference type="PANTHER" id="PTHR11442">
    <property type="entry name" value="HEMOGLOBIN FAMILY MEMBER"/>
    <property type="match status" value="1"/>
</dbReference>
<dbReference type="PANTHER" id="PTHR11442:SF42">
    <property type="entry name" value="HEMOGLOBIN SUBUNIT BETA"/>
    <property type="match status" value="1"/>
</dbReference>
<dbReference type="Pfam" id="PF00042">
    <property type="entry name" value="Globin"/>
    <property type="match status" value="1"/>
</dbReference>
<dbReference type="PRINTS" id="PR00814">
    <property type="entry name" value="BETAHAEM"/>
</dbReference>
<dbReference type="SUPFAM" id="SSF46458">
    <property type="entry name" value="Globin-like"/>
    <property type="match status" value="1"/>
</dbReference>
<dbReference type="PROSITE" id="PS01033">
    <property type="entry name" value="GLOBIN"/>
    <property type="match status" value="1"/>
</dbReference>
<comment type="function">
    <text>Involved in oxygen transport from the lung to the various peripheral tissues.</text>
</comment>
<comment type="subunit">
    <text>Heterotetramer of two alpha chains and two beta chains.</text>
</comment>
<comment type="tissue specificity">
    <text>Red blood cells.</text>
</comment>
<comment type="similarity">
    <text evidence="3">Belongs to the globin family.</text>
</comment>
<reference key="1">
    <citation type="journal article" date="1973" name="Int. J. Pept. Protein Res.">
        <title>The primary structures of the alpha and beta polypeptide chains of adult hemoglobin of the slow loris (Nycticebus coucang).</title>
        <authorList>
            <person name="Matsuda G."/>
            <person name="Maita T."/>
            <person name="Watanabe B."/>
            <person name="Ota H."/>
            <person name="Araya A."/>
            <person name="Goodman M."/>
            <person name="Prychodko W."/>
        </authorList>
    </citation>
    <scope>PROTEIN SEQUENCE</scope>
</reference>
<gene>
    <name type="primary">HBB</name>
</gene>
<protein>
    <recommendedName>
        <fullName>Hemoglobin subunit beta</fullName>
    </recommendedName>
    <alternativeName>
        <fullName>Beta-globin</fullName>
    </alternativeName>
    <alternativeName>
        <fullName>Hemoglobin beta chain</fullName>
    </alternativeName>
</protein>
<evidence type="ECO:0000250" key="1">
    <source>
        <dbReference type="UniProtKB" id="P02086"/>
    </source>
</evidence>
<evidence type="ECO:0000250" key="2">
    <source>
        <dbReference type="UniProtKB" id="P68871"/>
    </source>
</evidence>
<evidence type="ECO:0000255" key="3">
    <source>
        <dbReference type="PROSITE-ProRule" id="PRU00238"/>
    </source>
</evidence>
<accession>P02049</accession>
<organism>
    <name type="scientific">Nycticebus coucang</name>
    <name type="common">Slow loris</name>
    <dbReference type="NCBI Taxonomy" id="9470"/>
    <lineage>
        <taxon>Eukaryota</taxon>
        <taxon>Metazoa</taxon>
        <taxon>Chordata</taxon>
        <taxon>Craniata</taxon>
        <taxon>Vertebrata</taxon>
        <taxon>Euteleostomi</taxon>
        <taxon>Mammalia</taxon>
        <taxon>Eutheria</taxon>
        <taxon>Euarchontoglires</taxon>
        <taxon>Primates</taxon>
        <taxon>Strepsirrhini</taxon>
        <taxon>Lorisiformes</taxon>
        <taxon>Lorisidae</taxon>
        <taxon>Nycticebus</taxon>
    </lineage>
</organism>
<feature type="chain" id="PRO_0000053037" description="Hemoglobin subunit beta">
    <location>
        <begin position="1"/>
        <end position="146"/>
    </location>
</feature>
<feature type="domain" description="Globin" evidence="3">
    <location>
        <begin position="2"/>
        <end position="146"/>
    </location>
</feature>
<feature type="binding site" description="distal binding residue">
    <location>
        <position position="63"/>
    </location>
    <ligand>
        <name>heme b</name>
        <dbReference type="ChEBI" id="CHEBI:60344"/>
    </ligand>
    <ligandPart>
        <name>Fe</name>
        <dbReference type="ChEBI" id="CHEBI:18248"/>
    </ligandPart>
</feature>
<feature type="binding site" description="proximal binding residue">
    <location>
        <position position="92"/>
    </location>
    <ligand>
        <name>heme b</name>
        <dbReference type="ChEBI" id="CHEBI:60344"/>
    </ligand>
    <ligandPart>
        <name>Fe</name>
        <dbReference type="ChEBI" id="CHEBI:18248"/>
    </ligandPart>
</feature>
<feature type="modified residue" description="N-acetylvaline" evidence="1">
    <location>
        <position position="1"/>
    </location>
</feature>
<feature type="modified residue" description="Phosphothreonine" evidence="2">
    <location>
        <position position="12"/>
    </location>
</feature>
<feature type="modified residue" description="Phosphoserine" evidence="2">
    <location>
        <position position="44"/>
    </location>
</feature>
<feature type="modified residue" description="N6-acetyllysine" evidence="2">
    <location>
        <position position="59"/>
    </location>
</feature>
<feature type="modified residue" description="N6-acetyllysine" evidence="2">
    <location>
        <position position="82"/>
    </location>
</feature>
<feature type="modified residue" description="S-nitrosocysteine" evidence="2">
    <location>
        <position position="93"/>
    </location>
</feature>
<feature type="modified residue" description="N6-acetyllysine" evidence="2">
    <location>
        <position position="144"/>
    </location>
</feature>
<proteinExistence type="evidence at protein level"/>
<sequence length="146" mass="15900">VHLTGEEKSAVTALWGKVNVDDVGGEALGRLLVVYPWTQRFFESFGDLSSPSAVMGNPKVKAHGKKVLSAFSDGLNHLDNLKGTFAKLSELHCDKLHVDPENFRLLGNVLVVVLAHHFGKDFTPQVQSAYQKVVAGVANALAHKYH</sequence>
<name>HBB_NYCCO</name>